<protein>
    <recommendedName>
        <fullName evidence="1">Large ribosomal subunit protein uL18</fullName>
    </recommendedName>
    <alternativeName>
        <fullName evidence="2">50S ribosomal protein L18</fullName>
    </alternativeName>
</protein>
<reference key="1">
    <citation type="journal article" date="2003" name="Proc. Natl. Acad. Sci. U.S.A.">
        <title>Complete genome sequence and analysis of Wolinella succinogenes.</title>
        <authorList>
            <person name="Baar C."/>
            <person name="Eppinger M."/>
            <person name="Raddatz G."/>
            <person name="Simon J."/>
            <person name="Lanz C."/>
            <person name="Klimmek O."/>
            <person name="Nandakumar R."/>
            <person name="Gross R."/>
            <person name="Rosinus A."/>
            <person name="Keller H."/>
            <person name="Jagtap P."/>
            <person name="Linke B."/>
            <person name="Meyer F."/>
            <person name="Lederer H."/>
            <person name="Schuster S.C."/>
        </authorList>
    </citation>
    <scope>NUCLEOTIDE SEQUENCE [LARGE SCALE GENOMIC DNA]</scope>
    <source>
        <strain>ATCC 29543 / DSM 1740 / CCUG 13145 / JCM 31913 / LMG 7466 / NCTC 11488 / FDC 602W</strain>
    </source>
</reference>
<organism>
    <name type="scientific">Wolinella succinogenes (strain ATCC 29543 / DSM 1740 / CCUG 13145 / JCM 31913 / LMG 7466 / NCTC 11488 / FDC 602W)</name>
    <name type="common">Vibrio succinogenes</name>
    <dbReference type="NCBI Taxonomy" id="273121"/>
    <lineage>
        <taxon>Bacteria</taxon>
        <taxon>Pseudomonadati</taxon>
        <taxon>Campylobacterota</taxon>
        <taxon>Epsilonproteobacteria</taxon>
        <taxon>Campylobacterales</taxon>
        <taxon>Helicobacteraceae</taxon>
        <taxon>Wolinella</taxon>
    </lineage>
</organism>
<dbReference type="EMBL" id="BX571661">
    <property type="protein sequence ID" value="CAE10728.1"/>
    <property type="molecule type" value="Genomic_DNA"/>
</dbReference>
<dbReference type="RefSeq" id="WP_011139512.1">
    <property type="nucleotide sequence ID" value="NC_005090.1"/>
</dbReference>
<dbReference type="SMR" id="Q7M8E8"/>
<dbReference type="STRING" id="273121.WS1701"/>
<dbReference type="KEGG" id="wsu:WS1701"/>
<dbReference type="eggNOG" id="COG0256">
    <property type="taxonomic scope" value="Bacteria"/>
</dbReference>
<dbReference type="HOGENOM" id="CLU_098841_0_1_7"/>
<dbReference type="Proteomes" id="UP000000422">
    <property type="component" value="Chromosome"/>
</dbReference>
<dbReference type="GO" id="GO:0022625">
    <property type="term" value="C:cytosolic large ribosomal subunit"/>
    <property type="evidence" value="ECO:0007669"/>
    <property type="project" value="TreeGrafter"/>
</dbReference>
<dbReference type="GO" id="GO:0008097">
    <property type="term" value="F:5S rRNA binding"/>
    <property type="evidence" value="ECO:0007669"/>
    <property type="project" value="TreeGrafter"/>
</dbReference>
<dbReference type="GO" id="GO:0003735">
    <property type="term" value="F:structural constituent of ribosome"/>
    <property type="evidence" value="ECO:0007669"/>
    <property type="project" value="InterPro"/>
</dbReference>
<dbReference type="GO" id="GO:0006412">
    <property type="term" value="P:translation"/>
    <property type="evidence" value="ECO:0007669"/>
    <property type="project" value="UniProtKB-UniRule"/>
</dbReference>
<dbReference type="CDD" id="cd00432">
    <property type="entry name" value="Ribosomal_L18_L5e"/>
    <property type="match status" value="1"/>
</dbReference>
<dbReference type="Gene3D" id="3.30.420.100">
    <property type="match status" value="1"/>
</dbReference>
<dbReference type="HAMAP" id="MF_01337_B">
    <property type="entry name" value="Ribosomal_uL18_B"/>
    <property type="match status" value="1"/>
</dbReference>
<dbReference type="InterPro" id="IPR004389">
    <property type="entry name" value="Ribosomal_uL18_bac-type"/>
</dbReference>
<dbReference type="InterPro" id="IPR005484">
    <property type="entry name" value="Ribosomal_uL18_bac/euk"/>
</dbReference>
<dbReference type="NCBIfam" id="TIGR00060">
    <property type="entry name" value="L18_bact"/>
    <property type="match status" value="1"/>
</dbReference>
<dbReference type="PANTHER" id="PTHR12899">
    <property type="entry name" value="39S RIBOSOMAL PROTEIN L18, MITOCHONDRIAL"/>
    <property type="match status" value="1"/>
</dbReference>
<dbReference type="PANTHER" id="PTHR12899:SF3">
    <property type="entry name" value="LARGE RIBOSOMAL SUBUNIT PROTEIN UL18M"/>
    <property type="match status" value="1"/>
</dbReference>
<dbReference type="Pfam" id="PF00861">
    <property type="entry name" value="Ribosomal_L18p"/>
    <property type="match status" value="1"/>
</dbReference>
<dbReference type="SUPFAM" id="SSF53137">
    <property type="entry name" value="Translational machinery components"/>
    <property type="match status" value="1"/>
</dbReference>
<feature type="chain" id="PRO_0000131388" description="Large ribosomal subunit protein uL18">
    <location>
        <begin position="1"/>
        <end position="118"/>
    </location>
</feature>
<sequence length="118" mass="13012">MLEKVLKRKNALRAKRKLRVRGKIFGTAQKPRVSLFRSNRYLYAQAINDESGLTLASVDGKKLGLGNNKEEAKKIAASFAASLQEAGIKEVVFDRNGYLYHGVVASFADSLRENGIGL</sequence>
<name>RL18_WOLSU</name>
<gene>
    <name evidence="1" type="primary">rplR</name>
    <name type="ordered locus">WS1701</name>
</gene>
<keyword id="KW-1185">Reference proteome</keyword>
<keyword id="KW-0687">Ribonucleoprotein</keyword>
<keyword id="KW-0689">Ribosomal protein</keyword>
<keyword id="KW-0694">RNA-binding</keyword>
<keyword id="KW-0699">rRNA-binding</keyword>
<accession>Q7M8E8</accession>
<comment type="function">
    <text evidence="1">This is one of the proteins that bind and probably mediate the attachment of the 5S RNA into the large ribosomal subunit, where it forms part of the central protuberance.</text>
</comment>
<comment type="subunit">
    <text evidence="1">Part of the 50S ribosomal subunit; part of the 5S rRNA/L5/L18/L25 subcomplex. Contacts the 5S and 23S rRNAs.</text>
</comment>
<comment type="similarity">
    <text evidence="1">Belongs to the universal ribosomal protein uL18 family.</text>
</comment>
<proteinExistence type="inferred from homology"/>
<evidence type="ECO:0000255" key="1">
    <source>
        <dbReference type="HAMAP-Rule" id="MF_01337"/>
    </source>
</evidence>
<evidence type="ECO:0000305" key="2"/>